<name>SYI_BACFN</name>
<evidence type="ECO:0000255" key="1">
    <source>
        <dbReference type="HAMAP-Rule" id="MF_02003"/>
    </source>
</evidence>
<feature type="chain" id="PRO_0000098521" description="Isoleucine--tRNA ligase">
    <location>
        <begin position="1"/>
        <end position="1141"/>
    </location>
</feature>
<feature type="short sequence motif" description="'HIGH' region">
    <location>
        <begin position="50"/>
        <end position="60"/>
    </location>
</feature>
<feature type="short sequence motif" description="'KMSKS' region">
    <location>
        <begin position="689"/>
        <end position="693"/>
    </location>
</feature>
<feature type="binding site" evidence="1">
    <location>
        <position position="692"/>
    </location>
    <ligand>
        <name>ATP</name>
        <dbReference type="ChEBI" id="CHEBI:30616"/>
    </ligand>
</feature>
<accession>Q5LCU8</accession>
<keyword id="KW-0030">Aminoacyl-tRNA synthetase</keyword>
<keyword id="KW-0067">ATP-binding</keyword>
<keyword id="KW-0963">Cytoplasm</keyword>
<keyword id="KW-0436">Ligase</keyword>
<keyword id="KW-0479">Metal-binding</keyword>
<keyword id="KW-0547">Nucleotide-binding</keyword>
<keyword id="KW-0648">Protein biosynthesis</keyword>
<keyword id="KW-0862">Zinc</keyword>
<organism>
    <name type="scientific">Bacteroides fragilis (strain ATCC 25285 / DSM 2151 / CCUG 4856 / JCM 11019 / LMG 10263 / NCTC 9343 / Onslow / VPI 2553 / EN-2)</name>
    <dbReference type="NCBI Taxonomy" id="272559"/>
    <lineage>
        <taxon>Bacteria</taxon>
        <taxon>Pseudomonadati</taxon>
        <taxon>Bacteroidota</taxon>
        <taxon>Bacteroidia</taxon>
        <taxon>Bacteroidales</taxon>
        <taxon>Bacteroidaceae</taxon>
        <taxon>Bacteroides</taxon>
    </lineage>
</organism>
<dbReference type="EC" id="6.1.1.5" evidence="1"/>
<dbReference type="EMBL" id="CR626927">
    <property type="protein sequence ID" value="CAH08065.1"/>
    <property type="molecule type" value="Genomic_DNA"/>
</dbReference>
<dbReference type="RefSeq" id="WP_005787674.1">
    <property type="nucleotide sequence ID" value="NZ_UFTH01000001.1"/>
</dbReference>
<dbReference type="SMR" id="Q5LCU8"/>
<dbReference type="PaxDb" id="272559-BF9343_2284"/>
<dbReference type="GeneID" id="60367388"/>
<dbReference type="KEGG" id="bfs:BF9343_2284"/>
<dbReference type="eggNOG" id="COG0060">
    <property type="taxonomic scope" value="Bacteria"/>
</dbReference>
<dbReference type="HOGENOM" id="CLU_001493_1_1_10"/>
<dbReference type="Proteomes" id="UP000006731">
    <property type="component" value="Chromosome"/>
</dbReference>
<dbReference type="GO" id="GO:0005737">
    <property type="term" value="C:cytoplasm"/>
    <property type="evidence" value="ECO:0007669"/>
    <property type="project" value="UniProtKB-SubCell"/>
</dbReference>
<dbReference type="GO" id="GO:0002161">
    <property type="term" value="F:aminoacyl-tRNA deacylase activity"/>
    <property type="evidence" value="ECO:0007669"/>
    <property type="project" value="InterPro"/>
</dbReference>
<dbReference type="GO" id="GO:0005524">
    <property type="term" value="F:ATP binding"/>
    <property type="evidence" value="ECO:0007669"/>
    <property type="project" value="UniProtKB-UniRule"/>
</dbReference>
<dbReference type="GO" id="GO:0004822">
    <property type="term" value="F:isoleucine-tRNA ligase activity"/>
    <property type="evidence" value="ECO:0007669"/>
    <property type="project" value="UniProtKB-UniRule"/>
</dbReference>
<dbReference type="GO" id="GO:0000049">
    <property type="term" value="F:tRNA binding"/>
    <property type="evidence" value="ECO:0007669"/>
    <property type="project" value="InterPro"/>
</dbReference>
<dbReference type="GO" id="GO:0008270">
    <property type="term" value="F:zinc ion binding"/>
    <property type="evidence" value="ECO:0007669"/>
    <property type="project" value="UniProtKB-UniRule"/>
</dbReference>
<dbReference type="GO" id="GO:0006428">
    <property type="term" value="P:isoleucyl-tRNA aminoacylation"/>
    <property type="evidence" value="ECO:0007669"/>
    <property type="project" value="UniProtKB-UniRule"/>
</dbReference>
<dbReference type="CDD" id="cd07961">
    <property type="entry name" value="Anticodon_Ia_Ile_ABEc"/>
    <property type="match status" value="1"/>
</dbReference>
<dbReference type="CDD" id="cd00818">
    <property type="entry name" value="IleRS_core"/>
    <property type="match status" value="1"/>
</dbReference>
<dbReference type="FunFam" id="1.10.730.10:FF:000036">
    <property type="entry name" value="Isoleucine--tRNA ligase"/>
    <property type="match status" value="1"/>
</dbReference>
<dbReference type="FunFam" id="3.40.50.620:FF:000175">
    <property type="entry name" value="Isoleucine--tRNA ligase"/>
    <property type="match status" value="1"/>
</dbReference>
<dbReference type="FunFam" id="3.40.50.620:FF:000205">
    <property type="entry name" value="Isoleucine--tRNA ligase"/>
    <property type="match status" value="1"/>
</dbReference>
<dbReference type="Gene3D" id="3.30.720.200">
    <property type="match status" value="1"/>
</dbReference>
<dbReference type="Gene3D" id="3.40.50.620">
    <property type="entry name" value="HUPs"/>
    <property type="match status" value="2"/>
</dbReference>
<dbReference type="Gene3D" id="1.10.730.10">
    <property type="entry name" value="Isoleucyl-tRNA Synthetase, Domain 1"/>
    <property type="match status" value="1"/>
</dbReference>
<dbReference type="HAMAP" id="MF_02003">
    <property type="entry name" value="Ile_tRNA_synth_type2"/>
    <property type="match status" value="1"/>
</dbReference>
<dbReference type="InterPro" id="IPR002300">
    <property type="entry name" value="aa-tRNA-synth_Ia"/>
</dbReference>
<dbReference type="InterPro" id="IPR033709">
    <property type="entry name" value="Anticodon_Ile_ABEc"/>
</dbReference>
<dbReference type="InterPro" id="IPR002301">
    <property type="entry name" value="Ile-tRNA-ligase"/>
</dbReference>
<dbReference type="InterPro" id="IPR023586">
    <property type="entry name" value="Ile-tRNA-ligase_type2"/>
</dbReference>
<dbReference type="InterPro" id="IPR013155">
    <property type="entry name" value="M/V/L/I-tRNA-synth_anticd-bd"/>
</dbReference>
<dbReference type="InterPro" id="IPR014729">
    <property type="entry name" value="Rossmann-like_a/b/a_fold"/>
</dbReference>
<dbReference type="InterPro" id="IPR009080">
    <property type="entry name" value="tRNAsynth_Ia_anticodon-bd"/>
</dbReference>
<dbReference type="InterPro" id="IPR009008">
    <property type="entry name" value="Val/Leu/Ile-tRNA-synth_edit"/>
</dbReference>
<dbReference type="NCBIfam" id="TIGR00392">
    <property type="entry name" value="ileS"/>
    <property type="match status" value="1"/>
</dbReference>
<dbReference type="PANTHER" id="PTHR42780:SF1">
    <property type="entry name" value="ISOLEUCINE--TRNA LIGASE, CYTOPLASMIC"/>
    <property type="match status" value="1"/>
</dbReference>
<dbReference type="PANTHER" id="PTHR42780">
    <property type="entry name" value="SOLEUCYL-TRNA SYNTHETASE"/>
    <property type="match status" value="1"/>
</dbReference>
<dbReference type="Pfam" id="PF08264">
    <property type="entry name" value="Anticodon_1"/>
    <property type="match status" value="1"/>
</dbReference>
<dbReference type="Pfam" id="PF19302">
    <property type="entry name" value="DUF5915"/>
    <property type="match status" value="1"/>
</dbReference>
<dbReference type="Pfam" id="PF00133">
    <property type="entry name" value="tRNA-synt_1"/>
    <property type="match status" value="1"/>
</dbReference>
<dbReference type="PRINTS" id="PR00984">
    <property type="entry name" value="TRNASYNTHILE"/>
</dbReference>
<dbReference type="SUPFAM" id="SSF47323">
    <property type="entry name" value="Anticodon-binding domain of a subclass of class I aminoacyl-tRNA synthetases"/>
    <property type="match status" value="1"/>
</dbReference>
<dbReference type="SUPFAM" id="SSF52374">
    <property type="entry name" value="Nucleotidylyl transferase"/>
    <property type="match status" value="1"/>
</dbReference>
<dbReference type="SUPFAM" id="SSF50677">
    <property type="entry name" value="ValRS/IleRS/LeuRS editing domain"/>
    <property type="match status" value="1"/>
</dbReference>
<reference key="1">
    <citation type="journal article" date="2005" name="Science">
        <title>Extensive DNA inversions in the B. fragilis genome control variable gene expression.</title>
        <authorList>
            <person name="Cerdeno-Tarraga A.-M."/>
            <person name="Patrick S."/>
            <person name="Crossman L.C."/>
            <person name="Blakely G."/>
            <person name="Abratt V."/>
            <person name="Lennard N."/>
            <person name="Poxton I."/>
            <person name="Duerden B."/>
            <person name="Harris B."/>
            <person name="Quail M.A."/>
            <person name="Barron A."/>
            <person name="Clark L."/>
            <person name="Corton C."/>
            <person name="Doggett J."/>
            <person name="Holden M.T.G."/>
            <person name="Larke N."/>
            <person name="Line A."/>
            <person name="Lord A."/>
            <person name="Norbertczak H."/>
            <person name="Ormond D."/>
            <person name="Price C."/>
            <person name="Rabbinowitsch E."/>
            <person name="Woodward J."/>
            <person name="Barrell B.G."/>
            <person name="Parkhill J."/>
        </authorList>
    </citation>
    <scope>NUCLEOTIDE SEQUENCE [LARGE SCALE GENOMIC DNA]</scope>
    <source>
        <strain>ATCC 25285 / DSM 2151 / CCUG 4856 / JCM 11019 / LMG 10263 / NCTC 9343 / Onslow / VPI 2553 / EN-2</strain>
    </source>
</reference>
<sequence length="1141" mass="130111">MSKKFAEYSQFDLSKVNKDVLKKWDENQVFAKSMTEREGCPSFVFFEGPPSANGMPGIHHVMARSIKDIFCRYKTMKGYQVKRKAGWDTHGLPVELGVEKSLGITKEDIGKTISVAEYNAHCRQDVMKFTKEWEDLTHKMGYWVDMKHPYITYDNRYIETLWWLLKQLYKKGLLYKGYTIQPYSPAAGTGLSSHELNQPGCYRDVKDTTVVAQFKMKNPKPEMAQWGTPYFLAWTTTPWTLPSNTALCVGPKIDYVAVQSYNAYTGQPITVVLAKALLNAHFNPKAAELKLEDYKAGDKLVPFKVIAEYKGPDLVGMEYEQLIPWVNPGEGAFRVILGDYVTTEDGTGIVHIAPTFGADDAQVAKAAGIPPLQLVNKKGELRPMVDLTGKFYTLDELDEDFIKQRVNVDLYKEYAGRFVKNAYDPNLSDQDESLDVSICMMMKVNNQAFKIEKHVHNYPHCWRTDKPVLYYPLDSWFIRSTACKERMIELNKTINWKPESTGTGRFGKWLENLNDWNLSRSRYWGTPLPIWRTEDNSDEKCIESVEELYNEIEKSVAAGYMQSNPYKDKGFVPGEYNEENYNKIDLHRPYVDDIILVSKDGKPMKREADLIDVWFDSGAMPYAQIHYPFENKELLDSHQVYPADFIAEGVDQTRGWFFTLHAIATMVFDSVSYKAVISNGLVLDKNGNKMSKRLGNAVDPFSTIEQYGSDPLRWYMITNSSPWDNLKFDVDGIEEVRRKFFGTLYNTYSFFALYANVDGFEYKEADLPMNERPEIDRWILSVLNTLVKEVDTCYNEYEPTKAGRLISDFVNDNLSNWYVRLNRKRFWGGGFTQDKLSAYQTLYTCLETVAKLMAPIAPFYADRLYSDLIGVTGRDNVVSVHLAKFPEYNEKMVDKELEAQMQMAQDVTSMVLALRRKVNIKVRQPLQCIMIPVVDEVQKAHIEAVKALIMSEVNVKEIKFVDGAAGVLVKKVKCDFKKLGPKFGKQMKAVAAAVAEMSQEAIAELEKNGKYTFDLGGAEAVIESADVEIFSEDIPGWLVANEGKLTVALEVTVTDELRREGIARELVNRIQNIRKSSGFEITDKIKLTLSKNPQTDDAVNEYNSYICNQVLGTSLTLADEVKDGTELNFDDFSLFVNVVKE</sequence>
<proteinExistence type="inferred from homology"/>
<comment type="function">
    <text evidence="1">Catalyzes the attachment of isoleucine to tRNA(Ile). As IleRS can inadvertently accommodate and process structurally similar amino acids such as valine, to avoid such errors it has two additional distinct tRNA(Ile)-dependent editing activities. One activity is designated as 'pretransfer' editing and involves the hydrolysis of activated Val-AMP. The other activity is designated 'posttransfer' editing and involves deacylation of mischarged Val-tRNA(Ile).</text>
</comment>
<comment type="catalytic activity">
    <reaction evidence="1">
        <text>tRNA(Ile) + L-isoleucine + ATP = L-isoleucyl-tRNA(Ile) + AMP + diphosphate</text>
        <dbReference type="Rhea" id="RHEA:11060"/>
        <dbReference type="Rhea" id="RHEA-COMP:9666"/>
        <dbReference type="Rhea" id="RHEA-COMP:9695"/>
        <dbReference type="ChEBI" id="CHEBI:30616"/>
        <dbReference type="ChEBI" id="CHEBI:33019"/>
        <dbReference type="ChEBI" id="CHEBI:58045"/>
        <dbReference type="ChEBI" id="CHEBI:78442"/>
        <dbReference type="ChEBI" id="CHEBI:78528"/>
        <dbReference type="ChEBI" id="CHEBI:456215"/>
        <dbReference type="EC" id="6.1.1.5"/>
    </reaction>
</comment>
<comment type="cofactor">
    <cofactor evidence="1">
        <name>Zn(2+)</name>
        <dbReference type="ChEBI" id="CHEBI:29105"/>
    </cofactor>
</comment>
<comment type="subunit">
    <text evidence="1">Monomer.</text>
</comment>
<comment type="subcellular location">
    <subcellularLocation>
        <location evidence="1">Cytoplasm</location>
    </subcellularLocation>
</comment>
<comment type="domain">
    <text evidence="1">IleRS has two distinct active sites: one for aminoacylation and one for editing. The misactivated valine is translocated from the active site to the editing site, which sterically excludes the correctly activated isoleucine. The single editing site contains two valyl binding pockets, one specific for each substrate (Val-AMP or Val-tRNA(Ile)).</text>
</comment>
<comment type="similarity">
    <text evidence="1">Belongs to the class-I aminoacyl-tRNA synthetase family. IleS type 2 subfamily.</text>
</comment>
<gene>
    <name evidence="1" type="primary">ileS</name>
    <name type="ordered locus">BF2367</name>
</gene>
<protein>
    <recommendedName>
        <fullName evidence="1">Isoleucine--tRNA ligase</fullName>
        <ecNumber evidence="1">6.1.1.5</ecNumber>
    </recommendedName>
    <alternativeName>
        <fullName evidence="1">Isoleucyl-tRNA synthetase</fullName>
        <shortName evidence="1">IleRS</shortName>
    </alternativeName>
</protein>